<evidence type="ECO:0000255" key="1">
    <source>
        <dbReference type="HAMAP-Rule" id="MF_01402"/>
    </source>
</evidence>
<accession>Q6LXB3</accession>
<proteinExistence type="inferred from homology"/>
<gene>
    <name evidence="1" type="primary">apgM</name>
    <name type="ordered locus">MMP1439</name>
</gene>
<reference key="1">
    <citation type="journal article" date="2004" name="J. Bacteriol.">
        <title>Complete genome sequence of the genetically tractable hydrogenotrophic methanogen Methanococcus maripaludis.</title>
        <authorList>
            <person name="Hendrickson E.L."/>
            <person name="Kaul R."/>
            <person name="Zhou Y."/>
            <person name="Bovee D."/>
            <person name="Chapman P."/>
            <person name="Chung J."/>
            <person name="Conway de Macario E."/>
            <person name="Dodsworth J.A."/>
            <person name="Gillett W."/>
            <person name="Graham D.E."/>
            <person name="Hackett M."/>
            <person name="Haydock A.K."/>
            <person name="Kang A."/>
            <person name="Land M.L."/>
            <person name="Levy R."/>
            <person name="Lie T.J."/>
            <person name="Major T.A."/>
            <person name="Moore B.C."/>
            <person name="Porat I."/>
            <person name="Palmeiri A."/>
            <person name="Rouse G."/>
            <person name="Saenphimmachak C."/>
            <person name="Soell D."/>
            <person name="Van Dien S."/>
            <person name="Wang T."/>
            <person name="Whitman W.B."/>
            <person name="Xia Q."/>
            <person name="Zhang Y."/>
            <person name="Larimer F.W."/>
            <person name="Olson M.V."/>
            <person name="Leigh J.A."/>
        </authorList>
    </citation>
    <scope>NUCLEOTIDE SEQUENCE [LARGE SCALE GENOMIC DNA]</scope>
    <source>
        <strain>DSM 14266 / JCM 13030 / NBRC 101832 / S2 / LL</strain>
    </source>
</reference>
<sequence>MKAVIFVVDGLGDRPDKNGNTPLKEAKTPVMDRMAKEGICGLMNSVDIGVRPGSDTAHLALLGYDPYTTYTGRGPFEACGVGVTVKPGDIAFRCNFSSVDENFIVTDRRAGRIENTSELEKELDGLKIDDVEIIFKESGGYRAALVLRGPGLSDKITDADPKKEGKKVKEIHPLDDSKEAKKTAEIVNKLLKIAYEKLDKHPVNEERRKQNLPVANMIVPRGVGQVPEIMQFTEKTGLKGACIAGTGLIKGIAKMVGLDVIDVEGCDGTPDSDFMAKACAIVETLENYDFILVNVKGADEAGHDGNYELKKQVIEKVDEMLDYITKNISKDEVYFVLSGDHSTPIEEMDHSADPLPVVLWGKSVRVDDVEKFDEFSTYKGGLNWIKGVHIMPILLDLMGLAKKYGA</sequence>
<name>APGM_METMP</name>
<protein>
    <recommendedName>
        <fullName evidence="1">2,3-bisphosphoglycerate-independent phosphoglycerate mutase</fullName>
        <shortName evidence="1">BPG-independent PGAM</shortName>
        <shortName evidence="1">Phosphoglyceromutase</shortName>
        <shortName evidence="1">aPGAM</shortName>
        <ecNumber evidence="1">5.4.2.12</ecNumber>
    </recommendedName>
</protein>
<keyword id="KW-0324">Glycolysis</keyword>
<keyword id="KW-0413">Isomerase</keyword>
<keyword id="KW-1185">Reference proteome</keyword>
<feature type="chain" id="PRO_0000138138" description="2,3-bisphosphoglycerate-independent phosphoglycerate mutase">
    <location>
        <begin position="1"/>
        <end position="406"/>
    </location>
</feature>
<organism>
    <name type="scientific">Methanococcus maripaludis (strain DSM 14266 / JCM 13030 / NBRC 101832 / S2 / LL)</name>
    <dbReference type="NCBI Taxonomy" id="267377"/>
    <lineage>
        <taxon>Archaea</taxon>
        <taxon>Methanobacteriati</taxon>
        <taxon>Methanobacteriota</taxon>
        <taxon>Methanomada group</taxon>
        <taxon>Methanococci</taxon>
        <taxon>Methanococcales</taxon>
        <taxon>Methanococcaceae</taxon>
        <taxon>Methanococcus</taxon>
    </lineage>
</organism>
<dbReference type="EC" id="5.4.2.12" evidence="1"/>
<dbReference type="EMBL" id="BX950229">
    <property type="protein sequence ID" value="CAF30995.1"/>
    <property type="molecule type" value="Genomic_DNA"/>
</dbReference>
<dbReference type="RefSeq" id="WP_011171383.1">
    <property type="nucleotide sequence ID" value="NC_005791.1"/>
</dbReference>
<dbReference type="SMR" id="Q6LXB3"/>
<dbReference type="STRING" id="267377.MMP1439"/>
<dbReference type="EnsemblBacteria" id="CAF30995">
    <property type="protein sequence ID" value="CAF30995"/>
    <property type="gene ID" value="MMP1439"/>
</dbReference>
<dbReference type="GeneID" id="2761971"/>
<dbReference type="KEGG" id="mmp:MMP1439"/>
<dbReference type="PATRIC" id="fig|267377.15.peg.1475"/>
<dbReference type="eggNOG" id="arCOG01696">
    <property type="taxonomic scope" value="Archaea"/>
</dbReference>
<dbReference type="HOGENOM" id="CLU_034906_2_0_2"/>
<dbReference type="OrthoDB" id="52918at2157"/>
<dbReference type="UniPathway" id="UPA00109">
    <property type="reaction ID" value="UER00186"/>
</dbReference>
<dbReference type="Proteomes" id="UP000000590">
    <property type="component" value="Chromosome"/>
</dbReference>
<dbReference type="GO" id="GO:0046872">
    <property type="term" value="F:metal ion binding"/>
    <property type="evidence" value="ECO:0007669"/>
    <property type="project" value="InterPro"/>
</dbReference>
<dbReference type="GO" id="GO:0004619">
    <property type="term" value="F:phosphoglycerate mutase activity"/>
    <property type="evidence" value="ECO:0007669"/>
    <property type="project" value="UniProtKB-EC"/>
</dbReference>
<dbReference type="GO" id="GO:0006096">
    <property type="term" value="P:glycolytic process"/>
    <property type="evidence" value="ECO:0007669"/>
    <property type="project" value="UniProtKB-UniRule"/>
</dbReference>
<dbReference type="CDD" id="cd16011">
    <property type="entry name" value="iPGM_like"/>
    <property type="match status" value="1"/>
</dbReference>
<dbReference type="Gene3D" id="3.40.720.10">
    <property type="entry name" value="Alkaline Phosphatase, subunit A"/>
    <property type="match status" value="2"/>
</dbReference>
<dbReference type="HAMAP" id="MF_01402_A">
    <property type="entry name" value="ApgM_A"/>
    <property type="match status" value="1"/>
</dbReference>
<dbReference type="InterPro" id="IPR017850">
    <property type="entry name" value="Alkaline_phosphatase_core_sf"/>
</dbReference>
<dbReference type="InterPro" id="IPR023665">
    <property type="entry name" value="ApgAM_prokaryotes"/>
</dbReference>
<dbReference type="InterPro" id="IPR006124">
    <property type="entry name" value="Metalloenzyme"/>
</dbReference>
<dbReference type="InterPro" id="IPR004456">
    <property type="entry name" value="Pglycerate_mutase_ApgM"/>
</dbReference>
<dbReference type="NCBIfam" id="TIGR00306">
    <property type="entry name" value="apgM"/>
    <property type="match status" value="1"/>
</dbReference>
<dbReference type="NCBIfam" id="NF003104">
    <property type="entry name" value="PRK04024.1"/>
    <property type="match status" value="1"/>
</dbReference>
<dbReference type="PANTHER" id="PTHR31209">
    <property type="entry name" value="COFACTOR-INDEPENDENT PHOSPHOGLYCERATE MUTASE"/>
    <property type="match status" value="1"/>
</dbReference>
<dbReference type="PANTHER" id="PTHR31209:SF0">
    <property type="entry name" value="METALLOENZYME DOMAIN-CONTAINING PROTEIN"/>
    <property type="match status" value="1"/>
</dbReference>
<dbReference type="Pfam" id="PF01676">
    <property type="entry name" value="Metalloenzyme"/>
    <property type="match status" value="1"/>
</dbReference>
<dbReference type="Pfam" id="PF10143">
    <property type="entry name" value="PhosphMutase"/>
    <property type="match status" value="1"/>
</dbReference>
<dbReference type="PIRSF" id="PIRSF006392">
    <property type="entry name" value="IPGAM_arch"/>
    <property type="match status" value="1"/>
</dbReference>
<dbReference type="SUPFAM" id="SSF53649">
    <property type="entry name" value="Alkaline phosphatase-like"/>
    <property type="match status" value="1"/>
</dbReference>
<comment type="function">
    <text evidence="1">Catalyzes the interconversion of 2-phosphoglycerate and 3-phosphoglycerate.</text>
</comment>
<comment type="catalytic activity">
    <reaction evidence="1">
        <text>(2R)-2-phosphoglycerate = (2R)-3-phosphoglycerate</text>
        <dbReference type="Rhea" id="RHEA:15901"/>
        <dbReference type="ChEBI" id="CHEBI:58272"/>
        <dbReference type="ChEBI" id="CHEBI:58289"/>
        <dbReference type="EC" id="5.4.2.12"/>
    </reaction>
</comment>
<comment type="pathway">
    <text evidence="1">Carbohydrate degradation; glycolysis; pyruvate from D-glyceraldehyde 3-phosphate: step 3/5.</text>
</comment>
<comment type="similarity">
    <text evidence="1">Belongs to the BPG-independent phosphoglycerate mutase family. A-PGAM subfamily.</text>
</comment>